<dbReference type="EMBL" id="AL646053">
    <property type="protein sequence ID" value="CAD17540.1"/>
    <property type="molecule type" value="Genomic_DNA"/>
</dbReference>
<dbReference type="RefSeq" id="WP_011003701.1">
    <property type="nucleotide sequence ID" value="NC_003296.1"/>
</dbReference>
<dbReference type="SMR" id="Q8XSS8"/>
<dbReference type="STRING" id="267608.RSp0389"/>
<dbReference type="EnsemblBacteria" id="CAD17540">
    <property type="protein sequence ID" value="CAD17540"/>
    <property type="gene ID" value="RSp0389"/>
</dbReference>
<dbReference type="KEGG" id="rso:RSp0389"/>
<dbReference type="eggNOG" id="COG1677">
    <property type="taxonomic scope" value="Bacteria"/>
</dbReference>
<dbReference type="HOGENOM" id="CLU_147249_0_0_4"/>
<dbReference type="Proteomes" id="UP000001436">
    <property type="component" value="Plasmid megaplasmid Rsp"/>
</dbReference>
<dbReference type="GO" id="GO:0009425">
    <property type="term" value="C:bacterial-type flagellum basal body"/>
    <property type="evidence" value="ECO:0007669"/>
    <property type="project" value="UniProtKB-SubCell"/>
</dbReference>
<dbReference type="GO" id="GO:0003774">
    <property type="term" value="F:cytoskeletal motor activity"/>
    <property type="evidence" value="ECO:0007669"/>
    <property type="project" value="InterPro"/>
</dbReference>
<dbReference type="GO" id="GO:0005198">
    <property type="term" value="F:structural molecule activity"/>
    <property type="evidence" value="ECO:0007669"/>
    <property type="project" value="InterPro"/>
</dbReference>
<dbReference type="GO" id="GO:0071973">
    <property type="term" value="P:bacterial-type flagellum-dependent cell motility"/>
    <property type="evidence" value="ECO:0007669"/>
    <property type="project" value="InterPro"/>
</dbReference>
<dbReference type="HAMAP" id="MF_00724">
    <property type="entry name" value="FliE"/>
    <property type="match status" value="1"/>
</dbReference>
<dbReference type="InterPro" id="IPR001624">
    <property type="entry name" value="FliE"/>
</dbReference>
<dbReference type="NCBIfam" id="TIGR00205">
    <property type="entry name" value="fliE"/>
    <property type="match status" value="1"/>
</dbReference>
<dbReference type="PANTHER" id="PTHR34653">
    <property type="match status" value="1"/>
</dbReference>
<dbReference type="PANTHER" id="PTHR34653:SF1">
    <property type="entry name" value="FLAGELLAR HOOK-BASAL BODY COMPLEX PROTEIN FLIE"/>
    <property type="match status" value="1"/>
</dbReference>
<dbReference type="Pfam" id="PF02049">
    <property type="entry name" value="FliE"/>
    <property type="match status" value="1"/>
</dbReference>
<dbReference type="PRINTS" id="PR01006">
    <property type="entry name" value="FLGHOOKFLIE"/>
</dbReference>
<sequence>MDITNANSVVSLMNSVLAPSSKVGSLDGSAGDNAKVSIDFGAVLKSSLDKVDASQQKAETLSRSFELGNNDVDLHDVMLSLQKANIDLQTAVQVRNKLVSAYQNIMSMSI</sequence>
<gene>
    <name evidence="1" type="primary">fliE</name>
    <name type="ordered locus">RSp0389</name>
    <name type="ORF">RS00817</name>
</gene>
<protein>
    <recommendedName>
        <fullName evidence="1">Flagellar hook-basal body complex protein FliE</fullName>
    </recommendedName>
</protein>
<keyword id="KW-0975">Bacterial flagellum</keyword>
<keyword id="KW-0614">Plasmid</keyword>
<keyword id="KW-1185">Reference proteome</keyword>
<comment type="subcellular location">
    <subcellularLocation>
        <location evidence="1">Bacterial flagellum basal body</location>
    </subcellularLocation>
</comment>
<comment type="similarity">
    <text evidence="1">Belongs to the FliE family.</text>
</comment>
<accession>Q8XSS8</accession>
<organism>
    <name type="scientific">Ralstonia nicotianae (strain ATCC BAA-1114 / GMI1000)</name>
    <name type="common">Ralstonia solanacearum</name>
    <dbReference type="NCBI Taxonomy" id="267608"/>
    <lineage>
        <taxon>Bacteria</taxon>
        <taxon>Pseudomonadati</taxon>
        <taxon>Pseudomonadota</taxon>
        <taxon>Betaproteobacteria</taxon>
        <taxon>Burkholderiales</taxon>
        <taxon>Burkholderiaceae</taxon>
        <taxon>Ralstonia</taxon>
        <taxon>Ralstonia solanacearum species complex</taxon>
    </lineage>
</organism>
<name>FLIE_RALN1</name>
<feature type="chain" id="PRO_0000105559" description="Flagellar hook-basal body complex protein FliE">
    <location>
        <begin position="1"/>
        <end position="110"/>
    </location>
</feature>
<evidence type="ECO:0000255" key="1">
    <source>
        <dbReference type="HAMAP-Rule" id="MF_00724"/>
    </source>
</evidence>
<proteinExistence type="inferred from homology"/>
<geneLocation type="plasmid">
    <name>megaplasmid Rsp</name>
</geneLocation>
<reference key="1">
    <citation type="journal article" date="2002" name="Nature">
        <title>Genome sequence of the plant pathogen Ralstonia solanacearum.</title>
        <authorList>
            <person name="Salanoubat M."/>
            <person name="Genin S."/>
            <person name="Artiguenave F."/>
            <person name="Gouzy J."/>
            <person name="Mangenot S."/>
            <person name="Arlat M."/>
            <person name="Billault A."/>
            <person name="Brottier P."/>
            <person name="Camus J.-C."/>
            <person name="Cattolico L."/>
            <person name="Chandler M."/>
            <person name="Choisne N."/>
            <person name="Claudel-Renard C."/>
            <person name="Cunnac S."/>
            <person name="Demange N."/>
            <person name="Gaspin C."/>
            <person name="Lavie M."/>
            <person name="Moisan A."/>
            <person name="Robert C."/>
            <person name="Saurin W."/>
            <person name="Schiex T."/>
            <person name="Siguier P."/>
            <person name="Thebault P."/>
            <person name="Whalen M."/>
            <person name="Wincker P."/>
            <person name="Levy M."/>
            <person name="Weissenbach J."/>
            <person name="Boucher C.A."/>
        </authorList>
    </citation>
    <scope>NUCLEOTIDE SEQUENCE [LARGE SCALE GENOMIC DNA]</scope>
    <source>
        <strain>ATCC BAA-1114 / GMI1000</strain>
    </source>
</reference>